<organism>
    <name type="scientific">Aquifex aeolicus (strain VF5)</name>
    <dbReference type="NCBI Taxonomy" id="224324"/>
    <lineage>
        <taxon>Bacteria</taxon>
        <taxon>Pseudomonadati</taxon>
        <taxon>Aquificota</taxon>
        <taxon>Aquificia</taxon>
        <taxon>Aquificales</taxon>
        <taxon>Aquificaceae</taxon>
        <taxon>Aquifex</taxon>
    </lineage>
</organism>
<evidence type="ECO:0000255" key="1"/>
<evidence type="ECO:0000305" key="2"/>
<name>Y1502_AQUAE</name>
<reference key="1">
    <citation type="journal article" date="1998" name="Nature">
        <title>The complete genome of the hyperthermophilic bacterium Aquifex aeolicus.</title>
        <authorList>
            <person name="Deckert G."/>
            <person name="Warren P.V."/>
            <person name="Gaasterland T."/>
            <person name="Young W.G."/>
            <person name="Lenox A.L."/>
            <person name="Graham D.E."/>
            <person name="Overbeek R."/>
            <person name="Snead M.A."/>
            <person name="Keller M."/>
            <person name="Aujay M."/>
            <person name="Huber R."/>
            <person name="Feldman R.A."/>
            <person name="Short J.M."/>
            <person name="Olsen G.J."/>
            <person name="Swanson R.V."/>
        </authorList>
    </citation>
    <scope>NUCLEOTIDE SEQUENCE [LARGE SCALE GENOMIC DNA]</scope>
    <source>
        <strain>VF5</strain>
    </source>
</reference>
<keyword id="KW-1003">Cell membrane</keyword>
<keyword id="KW-0472">Membrane</keyword>
<keyword id="KW-1185">Reference proteome</keyword>
<keyword id="KW-0812">Transmembrane</keyword>
<keyword id="KW-1133">Transmembrane helix</keyword>
<sequence length="388" mass="45530">MLKMSRNEVLLYALVISAFLSISLFEGFVILTLLLVLYKILKERKIKGSLTPGILLYSLSTVLSTAIFYPKRFLKGIEEGLFQFIYFLNLKKEEVKGFSKIFPKLLLGISLILLPVVFYKFYKYGEPKPIWGGTFEVGFFYALFSITTFLLFFKERRFIYIPLFLLFLAVIFLSARRSMMLAFFVIFYLILFVLFKSKKLGKLAFWSVNFLIILSFIGGYVYLSQKDHRFKTLNDIILGKKELNYQNLNSISSGRLNLLLEGISIIKEDIENKRFINLLIGHGVRAGEYMPHRYGMTQHRYESIFIVSEFIERGILGLLGILYIYFMYFKKVLSFRIKREEDIYTYLLSVPLGLHLIQSVFTFFWDALLPLYLLLFKAFETLQDERKP</sequence>
<feature type="chain" id="PRO_0000186931" description="Uncharacterized protein aq_1502">
    <location>
        <begin position="1"/>
        <end position="388"/>
    </location>
</feature>
<feature type="transmembrane region" description="Helical" evidence="1">
    <location>
        <begin position="15"/>
        <end position="37"/>
    </location>
</feature>
<feature type="transmembrane region" description="Helical" evidence="1">
    <location>
        <begin position="97"/>
        <end position="119"/>
    </location>
</feature>
<feature type="transmembrane region" description="Helical" evidence="1">
    <location>
        <begin position="129"/>
        <end position="151"/>
    </location>
</feature>
<feature type="transmembrane region" description="Helical" evidence="1">
    <location>
        <begin position="158"/>
        <end position="175"/>
    </location>
</feature>
<feature type="transmembrane region" description="Helical" evidence="1">
    <location>
        <begin position="179"/>
        <end position="196"/>
    </location>
</feature>
<feature type="transmembrane region" description="Helical" evidence="1">
    <location>
        <begin position="203"/>
        <end position="225"/>
    </location>
</feature>
<feature type="transmembrane region" description="Helical" evidence="1">
    <location>
        <begin position="304"/>
        <end position="326"/>
    </location>
</feature>
<feature type="transmembrane region" description="Helical" evidence="1">
    <location>
        <begin position="347"/>
        <end position="369"/>
    </location>
</feature>
<gene>
    <name type="ordered locus">aq_1502</name>
</gene>
<comment type="subcellular location">
    <subcellularLocation>
        <location evidence="2">Cell membrane</location>
        <topology evidence="2">Multi-pass membrane protein</topology>
    </subcellularLocation>
</comment>
<accession>O67472</accession>
<proteinExistence type="predicted"/>
<dbReference type="EMBL" id="AE000657">
    <property type="protein sequence ID" value="AAC07437.1"/>
    <property type="molecule type" value="Genomic_DNA"/>
</dbReference>
<dbReference type="PIR" id="F70430">
    <property type="entry name" value="F70430"/>
</dbReference>
<dbReference type="RefSeq" id="NP_214037.1">
    <property type="nucleotide sequence ID" value="NC_000918.1"/>
</dbReference>
<dbReference type="SMR" id="O67472"/>
<dbReference type="STRING" id="224324.aq_1502"/>
<dbReference type="EnsemblBacteria" id="AAC07437">
    <property type="protein sequence ID" value="AAC07437"/>
    <property type="gene ID" value="aq_1502"/>
</dbReference>
<dbReference type="KEGG" id="aae:aq_1502"/>
<dbReference type="eggNOG" id="ENOG5032X31">
    <property type="taxonomic scope" value="Bacteria"/>
</dbReference>
<dbReference type="HOGENOM" id="CLU_696087_0_0_0"/>
<dbReference type="InParanoid" id="O67472"/>
<dbReference type="OrthoDB" id="10596at2"/>
<dbReference type="Proteomes" id="UP000000798">
    <property type="component" value="Chromosome"/>
</dbReference>
<dbReference type="GO" id="GO:0005886">
    <property type="term" value="C:plasma membrane"/>
    <property type="evidence" value="ECO:0007669"/>
    <property type="project" value="UniProtKB-SubCell"/>
</dbReference>
<dbReference type="InterPro" id="IPR007016">
    <property type="entry name" value="O-antigen_ligase-rel_domated"/>
</dbReference>
<dbReference type="Pfam" id="PF04932">
    <property type="entry name" value="Wzy_C"/>
    <property type="match status" value="1"/>
</dbReference>
<protein>
    <recommendedName>
        <fullName>Uncharacterized protein aq_1502</fullName>
    </recommendedName>
</protein>